<proteinExistence type="evidence at transcript level"/>
<evidence type="ECO:0000255" key="1">
    <source>
        <dbReference type="PROSITE-ProRule" id="PRU10023"/>
    </source>
</evidence>
<evidence type="ECO:0000305" key="2"/>
<sequence length="406" mass="44562">MIQNSDSATATLLPRKKERASGPVSVLAIGSANPPNVFHQSLFPDFYFNITQSNHMAEVKAKFTRMCAKSGIKKRRMHINEDILEAHPSIRSYHDNSLDVRQDMLVEEVPKLGKVAADNAIAEWGQPKSNITHLIFCTSSGIDMPGADWALMKLLGLRPTVNRVMVYQQGCFAGCTVLRIAKDLAENNKGSRILVVCSELTLISFRGPTEDHPENLVGQALFGDGAAALIVGADPIPHAENASFEIHWARSSVVPDSDDAVTGNIKENGLVLHLSKTIPDLIGQNIHTLLKDALEEMFDACNPSSFNDLFWVIHPGGPAILDAVEEELNLKSERTHASREILSQYGNMVSPGVLFVLDYMRKRSVDERLSTTGEGLEWGVMLGFGPGLTVETLILKSVPTQAFKYF</sequence>
<comment type="function">
    <text>Produces 3-methyl-1-(2,4,6-trihydroxyphenyl)butan-1-one (phloroisovalerophenone).</text>
</comment>
<comment type="catalytic activity">
    <reaction>
        <text>3-methylbutanoyl-CoA + 3 malonyl-CoA + 3 H(+) = phlorisovalerophenone + 3 CO2 + 4 CoA</text>
        <dbReference type="Rhea" id="RHEA:23572"/>
        <dbReference type="ChEBI" id="CHEBI:15378"/>
        <dbReference type="ChEBI" id="CHEBI:15951"/>
        <dbReference type="ChEBI" id="CHEBI:16526"/>
        <dbReference type="ChEBI" id="CHEBI:57287"/>
        <dbReference type="ChEBI" id="CHEBI:57345"/>
        <dbReference type="ChEBI" id="CHEBI:57384"/>
        <dbReference type="EC" id="2.3.1.156"/>
    </reaction>
</comment>
<comment type="similarity">
    <text evidence="2">Belongs to the thiolase-like superfamily. Chalcone/stilbene synthases family.</text>
</comment>
<keyword id="KW-0012">Acyltransferase</keyword>
<keyword id="KW-0808">Transferase</keyword>
<protein>
    <recommendedName>
        <fullName>Phloroisovalerophenone synthase</fullName>
        <shortName>Valerophenone synthase</shortName>
        <ecNumber>2.3.1.156</ecNumber>
    </recommendedName>
    <alternativeName>
        <fullName>3-methyl-1-(trihydroxyphenyl)butan-1-one synthase</fullName>
    </alternativeName>
</protein>
<feature type="chain" id="PRO_0000216086" description="Phloroisovalerophenone synthase">
    <location>
        <begin position="1"/>
        <end position="406"/>
    </location>
</feature>
<feature type="active site" evidence="1">
    <location>
        <position position="171"/>
    </location>
</feature>
<name>VPS_PSINU</name>
<organism>
    <name type="scientific">Psilotum nudum</name>
    <name type="common">Whisk fern</name>
    <name type="synonym">Lycopodium nudum</name>
    <dbReference type="NCBI Taxonomy" id="3240"/>
    <lineage>
        <taxon>Eukaryota</taxon>
        <taxon>Viridiplantae</taxon>
        <taxon>Streptophyta</taxon>
        <taxon>Embryophyta</taxon>
        <taxon>Tracheophyta</taxon>
        <taxon>Polypodiopsida</taxon>
        <taxon>Ophioglossidae</taxon>
        <taxon>Psilotales</taxon>
        <taxon>Psilotaceae</taxon>
        <taxon>Psilotum</taxon>
    </lineage>
</organism>
<accession>Q9SLX9</accession>
<gene>
    <name type="primary">VPS</name>
</gene>
<reference key="1">
    <citation type="submission" date="1999-01" db="EMBL/GenBank/DDBJ databases">
        <authorList>
            <person name="Yamazaki Y."/>
            <person name="Sankawa U."/>
        </authorList>
    </citation>
    <scope>NUCLEOTIDE SEQUENCE [MRNA]</scope>
</reference>
<dbReference type="EC" id="2.3.1.156"/>
<dbReference type="EMBL" id="AB022683">
    <property type="protein sequence ID" value="BAA87923.1"/>
    <property type="molecule type" value="mRNA"/>
</dbReference>
<dbReference type="SMR" id="Q9SLX9"/>
<dbReference type="GO" id="GO:0050634">
    <property type="term" value="F:phloroisovalerophenone synthase activity"/>
    <property type="evidence" value="ECO:0007669"/>
    <property type="project" value="UniProtKB-EC"/>
</dbReference>
<dbReference type="GO" id="GO:0030639">
    <property type="term" value="P:polyketide biosynthetic process"/>
    <property type="evidence" value="ECO:0007669"/>
    <property type="project" value="TreeGrafter"/>
</dbReference>
<dbReference type="CDD" id="cd00831">
    <property type="entry name" value="CHS_like"/>
    <property type="match status" value="1"/>
</dbReference>
<dbReference type="FunFam" id="3.40.47.10:FF:000014">
    <property type="entry name" value="Chalcone synthase 1"/>
    <property type="match status" value="1"/>
</dbReference>
<dbReference type="FunFam" id="3.40.47.10:FF:000025">
    <property type="entry name" value="Chalcone synthase 2"/>
    <property type="match status" value="1"/>
</dbReference>
<dbReference type="Gene3D" id="3.40.47.10">
    <property type="match status" value="2"/>
</dbReference>
<dbReference type="InterPro" id="IPR012328">
    <property type="entry name" value="Chalcone/stilbene_synt_C"/>
</dbReference>
<dbReference type="InterPro" id="IPR001099">
    <property type="entry name" value="Chalcone/stilbene_synt_N"/>
</dbReference>
<dbReference type="InterPro" id="IPR018088">
    <property type="entry name" value="Chalcone/stilbene_synthase_AS"/>
</dbReference>
<dbReference type="InterPro" id="IPR011141">
    <property type="entry name" value="Polyketide_synthase_type-III"/>
</dbReference>
<dbReference type="InterPro" id="IPR016039">
    <property type="entry name" value="Thiolase-like"/>
</dbReference>
<dbReference type="PANTHER" id="PTHR11877:SF80">
    <property type="entry name" value="CHALCONE SYNTHASE 1"/>
    <property type="match status" value="1"/>
</dbReference>
<dbReference type="PANTHER" id="PTHR11877">
    <property type="entry name" value="HYDROXYMETHYLGLUTARYL-COA SYNTHASE"/>
    <property type="match status" value="1"/>
</dbReference>
<dbReference type="Pfam" id="PF02797">
    <property type="entry name" value="Chal_sti_synt_C"/>
    <property type="match status" value="1"/>
</dbReference>
<dbReference type="Pfam" id="PF00195">
    <property type="entry name" value="Chal_sti_synt_N"/>
    <property type="match status" value="1"/>
</dbReference>
<dbReference type="PIRSF" id="PIRSF000451">
    <property type="entry name" value="PKS_III"/>
    <property type="match status" value="1"/>
</dbReference>
<dbReference type="SUPFAM" id="SSF53901">
    <property type="entry name" value="Thiolase-like"/>
    <property type="match status" value="2"/>
</dbReference>
<dbReference type="PROSITE" id="PS00441">
    <property type="entry name" value="CHALCONE_SYNTH"/>
    <property type="match status" value="1"/>
</dbReference>